<feature type="signal peptide" evidence="4">
    <location>
        <begin position="1"/>
        <end position="20"/>
    </location>
</feature>
<feature type="chain" id="PRO_0000002035" description="Apolipoprotein C-III">
    <location>
        <begin position="21"/>
        <end position="101"/>
    </location>
</feature>
<feature type="region of interest" description="Lipid-binding" evidence="1">
    <location>
        <begin position="69"/>
        <end position="101"/>
    </location>
</feature>
<feature type="site" description="May interact with the LDL receptor" evidence="2">
    <location>
        <position position="41"/>
    </location>
</feature>
<feature type="modified residue" description="Methionine sulfoxide" evidence="3">
    <location>
        <position position="64"/>
    </location>
</feature>
<feature type="glycosylation site" description="O-linked (GalNAc...) threonine" evidence="2">
    <location>
        <position position="96"/>
    </location>
</feature>
<organism>
    <name type="scientific">Rattus norvegicus</name>
    <name type="common">Rat</name>
    <dbReference type="NCBI Taxonomy" id="10116"/>
    <lineage>
        <taxon>Eukaryota</taxon>
        <taxon>Metazoa</taxon>
        <taxon>Chordata</taxon>
        <taxon>Craniata</taxon>
        <taxon>Vertebrata</taxon>
        <taxon>Euteleostomi</taxon>
        <taxon>Mammalia</taxon>
        <taxon>Eutheria</taxon>
        <taxon>Euarchontoglires</taxon>
        <taxon>Glires</taxon>
        <taxon>Rodentia</taxon>
        <taxon>Myomorpha</taxon>
        <taxon>Muroidea</taxon>
        <taxon>Muridae</taxon>
        <taxon>Murinae</taxon>
        <taxon>Rattus</taxon>
    </lineage>
</organism>
<evidence type="ECO:0000250" key="1"/>
<evidence type="ECO:0000250" key="2">
    <source>
        <dbReference type="UniProtKB" id="P02656"/>
    </source>
</evidence>
<evidence type="ECO:0000250" key="3">
    <source>
        <dbReference type="UniProtKB" id="P33622"/>
    </source>
</evidence>
<evidence type="ECO:0000255" key="4"/>
<evidence type="ECO:0000269" key="5">
    <source>
    </source>
</evidence>
<evidence type="ECO:0000305" key="6"/>
<proteinExistence type="evidence at transcript level"/>
<protein>
    <recommendedName>
        <fullName>Apolipoprotein C-III</fullName>
        <shortName>Apo-CIII</shortName>
        <shortName>ApoC-III</shortName>
    </recommendedName>
    <alternativeName>
        <fullName>Apolipoprotein C3</fullName>
    </alternativeName>
</protein>
<gene>
    <name type="primary">Apoc3</name>
</gene>
<accession>P06759</accession>
<reference key="1">
    <citation type="journal article" date="1986" name="J. Biol. Chem.">
        <title>Linkage, evolution, and expression of the rat apolipoprotein A-I, C-III, and A-IV genes.</title>
        <authorList>
            <person name="Haddad I.A."/>
            <person name="Ordovas J.M."/>
            <person name="Fitzpatrick T."/>
            <person name="Karathanasis S.K."/>
        </authorList>
    </citation>
    <scope>NUCLEOTIDE SEQUENCE [GENOMIC DNA]</scope>
    <scope>TISSUE SPECIFICITY</scope>
</reference>
<reference key="2">
    <citation type="submission" date="1998-12" db="EMBL/GenBank/DDBJ databases">
        <authorList>
            <person name="Haddad I.A."/>
            <person name="Ordovas J.M."/>
            <person name="Fitzpatrick T."/>
            <person name="Karathanasis S.K."/>
        </authorList>
    </citation>
    <scope>SEQUENCE REVISION TO 60</scope>
</reference>
<comment type="function">
    <text evidence="2">Component of triglyceride-rich very low density lipoproteins (VLDL) and high density lipoproteins (HDL) in plasma. Plays a multifaceted role in triglyceride homeostasis. Intracellularly, promotes hepatic very low density lipoprotein 1 (VLDL1) assembly and secretion; extracellularly, attenuates hydrolysis and clearance of triglyceride-rich lipoproteins (TRLs). Impairs the lipolysis of TRLs by inhibiting lipoprotein lipase and the hepatic uptake of TRLs by remnant receptors. Formed of several curved helices connected via semiflexible hinges, so that it can wrap tightly around the curved micelle surface and easily adapt to the different diameters of its natural binding partners.</text>
</comment>
<comment type="subcellular location">
    <subcellularLocation>
        <location evidence="2">Secreted</location>
    </subcellularLocation>
</comment>
<comment type="tissue specificity">
    <text evidence="5">Synthesized predominantly in liver and to a lesser degree in intestine.</text>
</comment>
<comment type="PTM">
    <text evidence="2">The most abundant glycoforms are characterized by an O-linked disaccharide galactose linked to N-acetylgalactosamine (Gal-GalNAc), further modified with up to 3 sialic acid residues. Less abundant glycoforms are characterized by more complex and fucosylated glycan moieties. O-glycosylated on Thr-96 with a core 1 or possibly core 8 glycan.</text>
</comment>
<comment type="similarity">
    <text evidence="6">Belongs to the apolipoprotein C3 family.</text>
</comment>
<dbReference type="EMBL" id="J02596">
    <property type="protein sequence ID" value="AAA40746.1"/>
    <property type="molecule type" value="Genomic_DNA"/>
</dbReference>
<dbReference type="PIR" id="B24700">
    <property type="entry name" value="B24700"/>
</dbReference>
<dbReference type="SMR" id="P06759"/>
<dbReference type="FunCoup" id="P06759">
    <property type="interactions" value="8"/>
</dbReference>
<dbReference type="STRING" id="10116.ENSRNOP00000074692"/>
<dbReference type="GlyCosmos" id="P06759">
    <property type="glycosylation" value="1 site, No reported glycans"/>
</dbReference>
<dbReference type="GlyGen" id="P06759">
    <property type="glycosylation" value="1 site"/>
</dbReference>
<dbReference type="iPTMnet" id="P06759"/>
<dbReference type="PhosphoSitePlus" id="P06759"/>
<dbReference type="PaxDb" id="10116-ENSRNOP00000067045"/>
<dbReference type="AGR" id="RGD:2136"/>
<dbReference type="RGD" id="2136">
    <property type="gene designation" value="Apoc3"/>
</dbReference>
<dbReference type="eggNOG" id="ENOG502SZ00">
    <property type="taxonomic scope" value="Eukaryota"/>
</dbReference>
<dbReference type="HOGENOM" id="CLU_154694_0_0_1"/>
<dbReference type="InParanoid" id="P06759"/>
<dbReference type="PhylomeDB" id="P06759"/>
<dbReference type="Reactome" id="R-RNO-8963888">
    <property type="pathway name" value="Chylomicron assembly"/>
</dbReference>
<dbReference type="Reactome" id="R-RNO-8963901">
    <property type="pathway name" value="Chylomicron remodeling"/>
</dbReference>
<dbReference type="Reactome" id="R-RNO-8964058">
    <property type="pathway name" value="HDL remodeling"/>
</dbReference>
<dbReference type="Reactome" id="R-RNO-975634">
    <property type="pathway name" value="Retinoid metabolism and transport"/>
</dbReference>
<dbReference type="PRO" id="PR:P06759"/>
<dbReference type="Proteomes" id="UP000002494">
    <property type="component" value="Unplaced"/>
</dbReference>
<dbReference type="GO" id="GO:0042627">
    <property type="term" value="C:chylomicron"/>
    <property type="evidence" value="ECO:0000266"/>
    <property type="project" value="RGD"/>
</dbReference>
<dbReference type="GO" id="GO:0005615">
    <property type="term" value="C:extracellular space"/>
    <property type="evidence" value="ECO:0000314"/>
    <property type="project" value="RGD"/>
</dbReference>
<dbReference type="GO" id="GO:0034363">
    <property type="term" value="C:intermediate-density lipoprotein particle"/>
    <property type="evidence" value="ECO:0000266"/>
    <property type="project" value="RGD"/>
</dbReference>
<dbReference type="GO" id="GO:0034366">
    <property type="term" value="C:spherical high-density lipoprotein particle"/>
    <property type="evidence" value="ECO:0000266"/>
    <property type="project" value="RGD"/>
</dbReference>
<dbReference type="GO" id="GO:0034361">
    <property type="term" value="C:very-low-density lipoprotein particle"/>
    <property type="evidence" value="ECO:0000266"/>
    <property type="project" value="RGD"/>
</dbReference>
<dbReference type="GO" id="GO:0030234">
    <property type="term" value="F:enzyme regulator activity"/>
    <property type="evidence" value="ECO:0000266"/>
    <property type="project" value="RGD"/>
</dbReference>
<dbReference type="GO" id="GO:0070653">
    <property type="term" value="F:high-density lipoprotein particle receptor binding"/>
    <property type="evidence" value="ECO:0000266"/>
    <property type="project" value="RGD"/>
</dbReference>
<dbReference type="GO" id="GO:0055102">
    <property type="term" value="F:lipase inhibitor activity"/>
    <property type="evidence" value="ECO:0000266"/>
    <property type="project" value="RGD"/>
</dbReference>
<dbReference type="GO" id="GO:0005319">
    <property type="term" value="F:lipid transporter activity"/>
    <property type="evidence" value="ECO:0000304"/>
    <property type="project" value="RGD"/>
</dbReference>
<dbReference type="GO" id="GO:0005543">
    <property type="term" value="F:phospholipid binding"/>
    <property type="evidence" value="ECO:0000266"/>
    <property type="project" value="RGD"/>
</dbReference>
<dbReference type="GO" id="GO:0071333">
    <property type="term" value="P:cellular response to glucose stimulus"/>
    <property type="evidence" value="ECO:0000314"/>
    <property type="project" value="RGD"/>
</dbReference>
<dbReference type="GO" id="GO:0033344">
    <property type="term" value="P:cholesterol efflux"/>
    <property type="evidence" value="ECO:0000266"/>
    <property type="project" value="RGD"/>
</dbReference>
<dbReference type="GO" id="GO:0042632">
    <property type="term" value="P:cholesterol homeostasis"/>
    <property type="evidence" value="ECO:0000266"/>
    <property type="project" value="RGD"/>
</dbReference>
<dbReference type="GO" id="GO:0008203">
    <property type="term" value="P:cholesterol metabolic process"/>
    <property type="evidence" value="ECO:0000266"/>
    <property type="project" value="RGD"/>
</dbReference>
<dbReference type="GO" id="GO:0034382">
    <property type="term" value="P:chylomicron remnant clearance"/>
    <property type="evidence" value="ECO:0000266"/>
    <property type="project" value="RGD"/>
</dbReference>
<dbReference type="GO" id="GO:0007186">
    <property type="term" value="P:G protein-coupled receptor signaling pathway"/>
    <property type="evidence" value="ECO:0000266"/>
    <property type="project" value="RGD"/>
</dbReference>
<dbReference type="GO" id="GO:0034375">
    <property type="term" value="P:high-density lipoprotein particle remodeling"/>
    <property type="evidence" value="ECO:0000266"/>
    <property type="project" value="RGD"/>
</dbReference>
<dbReference type="GO" id="GO:0006869">
    <property type="term" value="P:lipid transport"/>
    <property type="evidence" value="ECO:0000304"/>
    <property type="project" value="RGD"/>
</dbReference>
<dbReference type="GO" id="GO:0042157">
    <property type="term" value="P:lipoprotein metabolic process"/>
    <property type="evidence" value="ECO:0007669"/>
    <property type="project" value="InterPro"/>
</dbReference>
<dbReference type="GO" id="GO:0042953">
    <property type="term" value="P:lipoprotein transport"/>
    <property type="evidence" value="ECO:0000314"/>
    <property type="project" value="RGD"/>
</dbReference>
<dbReference type="GO" id="GO:0060621">
    <property type="term" value="P:negative regulation of cholesterol import"/>
    <property type="evidence" value="ECO:0000266"/>
    <property type="project" value="RGD"/>
</dbReference>
<dbReference type="GO" id="GO:0045717">
    <property type="term" value="P:negative regulation of fatty acid biosynthetic process"/>
    <property type="evidence" value="ECO:0000266"/>
    <property type="project" value="RGD"/>
</dbReference>
<dbReference type="GO" id="GO:0010987">
    <property type="term" value="P:negative regulation of high-density lipoprotein particle clearance"/>
    <property type="evidence" value="ECO:0000266"/>
    <property type="project" value="RGD"/>
</dbReference>
<dbReference type="GO" id="GO:0050995">
    <property type="term" value="P:negative regulation of lipid catabolic process"/>
    <property type="evidence" value="ECO:0000266"/>
    <property type="project" value="RGD"/>
</dbReference>
<dbReference type="GO" id="GO:0045833">
    <property type="term" value="P:negative regulation of lipid metabolic process"/>
    <property type="evidence" value="ECO:0000266"/>
    <property type="project" value="RGD"/>
</dbReference>
<dbReference type="GO" id="GO:0010989">
    <property type="term" value="P:negative regulation of low-density lipoprotein particle clearance"/>
    <property type="evidence" value="ECO:0000266"/>
    <property type="project" value="RGD"/>
</dbReference>
<dbReference type="GO" id="GO:0090324">
    <property type="term" value="P:negative regulation of oxidative phosphorylation"/>
    <property type="evidence" value="ECO:0000314"/>
    <property type="project" value="RGD"/>
</dbReference>
<dbReference type="GO" id="GO:0048261">
    <property type="term" value="P:negative regulation of receptor-mediated endocytosis"/>
    <property type="evidence" value="ECO:0000266"/>
    <property type="project" value="RGD"/>
</dbReference>
<dbReference type="GO" id="GO:0010897">
    <property type="term" value="P:negative regulation of triglyceride catabolic process"/>
    <property type="evidence" value="ECO:0000266"/>
    <property type="project" value="RGD"/>
</dbReference>
<dbReference type="GO" id="GO:0010916">
    <property type="term" value="P:negative regulation of very-low-density lipoprotein particle clearance"/>
    <property type="evidence" value="ECO:0000266"/>
    <property type="project" value="RGD"/>
</dbReference>
<dbReference type="GO" id="GO:0010903">
    <property type="term" value="P:negative regulation of very-low-density lipoprotein particle remodeling"/>
    <property type="evidence" value="ECO:0000266"/>
    <property type="project" value="RGD"/>
</dbReference>
<dbReference type="GO" id="GO:0033700">
    <property type="term" value="P:phospholipid efflux"/>
    <property type="evidence" value="ECO:0000266"/>
    <property type="project" value="RGD"/>
</dbReference>
<dbReference type="GO" id="GO:0010867">
    <property type="term" value="P:positive regulation of triglyceride biosynthetic process"/>
    <property type="evidence" value="ECO:0000315"/>
    <property type="project" value="RGD"/>
</dbReference>
<dbReference type="GO" id="GO:0032489">
    <property type="term" value="P:regulation of Cdc42 protein signal transduction"/>
    <property type="evidence" value="ECO:0000266"/>
    <property type="project" value="RGD"/>
</dbReference>
<dbReference type="GO" id="GO:0070542">
    <property type="term" value="P:response to fatty acid"/>
    <property type="evidence" value="ECO:0000270"/>
    <property type="project" value="RGD"/>
</dbReference>
<dbReference type="GO" id="GO:0007584">
    <property type="term" value="P:response to nutrient"/>
    <property type="evidence" value="ECO:0000270"/>
    <property type="project" value="RGD"/>
</dbReference>
<dbReference type="GO" id="GO:0043434">
    <property type="term" value="P:response to peptide hormone"/>
    <property type="evidence" value="ECO:0000314"/>
    <property type="project" value="RGD"/>
</dbReference>
<dbReference type="GO" id="GO:0034014">
    <property type="term" value="P:response to triglyceride"/>
    <property type="evidence" value="ECO:0000270"/>
    <property type="project" value="RGD"/>
</dbReference>
<dbReference type="GO" id="GO:0033189">
    <property type="term" value="P:response to vitamin A"/>
    <property type="evidence" value="ECO:0000270"/>
    <property type="project" value="RGD"/>
</dbReference>
<dbReference type="GO" id="GO:0009410">
    <property type="term" value="P:response to xenobiotic stimulus"/>
    <property type="evidence" value="ECO:0000270"/>
    <property type="project" value="RGD"/>
</dbReference>
<dbReference type="GO" id="GO:0019433">
    <property type="term" value="P:triglyceride catabolic process"/>
    <property type="evidence" value="ECO:0000266"/>
    <property type="project" value="RGD"/>
</dbReference>
<dbReference type="GO" id="GO:0070328">
    <property type="term" value="P:triglyceride homeostasis"/>
    <property type="evidence" value="ECO:0000266"/>
    <property type="project" value="RGD"/>
</dbReference>
<dbReference type="GO" id="GO:0006641">
    <property type="term" value="P:triglyceride metabolic process"/>
    <property type="evidence" value="ECO:0000266"/>
    <property type="project" value="RGD"/>
</dbReference>
<dbReference type="GO" id="GO:0006642">
    <property type="term" value="P:triglyceride mobilization"/>
    <property type="evidence" value="ECO:0000266"/>
    <property type="project" value="RGD"/>
</dbReference>
<dbReference type="Gene3D" id="6.10.90.10">
    <property type="entry name" value="Apolipoprotein CIII"/>
    <property type="match status" value="1"/>
</dbReference>
<dbReference type="InterPro" id="IPR008403">
    <property type="entry name" value="Apo-CIII"/>
</dbReference>
<dbReference type="InterPro" id="IPR038195">
    <property type="entry name" value="Apo_CIII_sf"/>
</dbReference>
<dbReference type="PANTHER" id="PTHR14225">
    <property type="entry name" value="APOLIPOPROTEIN C-III"/>
    <property type="match status" value="1"/>
</dbReference>
<dbReference type="PANTHER" id="PTHR14225:SF0">
    <property type="entry name" value="APOLIPOPROTEIN C-III"/>
    <property type="match status" value="1"/>
</dbReference>
<dbReference type="Pfam" id="PF05778">
    <property type="entry name" value="Apo-CIII"/>
    <property type="match status" value="1"/>
</dbReference>
<name>APOC3_RAT</name>
<keyword id="KW-0162">Chylomicron</keyword>
<keyword id="KW-0325">Glycoprotein</keyword>
<keyword id="KW-0442">Lipid degradation</keyword>
<keyword id="KW-0443">Lipid metabolism</keyword>
<keyword id="KW-0445">Lipid transport</keyword>
<keyword id="KW-0558">Oxidation</keyword>
<keyword id="KW-1185">Reference proteome</keyword>
<keyword id="KW-0964">Secreted</keyword>
<keyword id="KW-0730">Sialic acid</keyword>
<keyword id="KW-0732">Signal</keyword>
<keyword id="KW-0813">Transport</keyword>
<keyword id="KW-0850">VLDL</keyword>
<sequence length="101" mass="11117">MQPRMLLIVALVALLASARADEGEGSLLLGSMQGYMEQASKTVQDALSSMQESDIAVVASRGWMDNRFKSLKGYWSKFTDKFTGLWESGPEDQLTTPTLEP</sequence>